<accession>P02385</accession>
<accession>Q7ZYR6</accession>
<comment type="function">
    <text evidence="1">Component of the large ribosomal subunit. The ribosome is a large ribonucleoprotein complex responsible for the synthesis of proteins in the cell.</text>
</comment>
<comment type="subunit">
    <text evidence="1">Component of the large ribosomal subunit.</text>
</comment>
<comment type="subcellular location">
    <subcellularLocation>
        <location evidence="1">Cytoplasm</location>
    </subcellularLocation>
</comment>
<comment type="similarity">
    <text evidence="3">Belongs to the universal ribosomal protein uL4 family.</text>
</comment>
<comment type="sequence caution" evidence="3">
    <conflict type="miscellaneous discrepancy">
        <sequence resource="EMBL-CDS" id="AAH41744"/>
    </conflict>
    <text>Contaminating sequence. Potential poly-A sequence.</text>
</comment>
<protein>
    <recommendedName>
        <fullName evidence="3">Large ribosomal subunit protein uL4B</fullName>
    </recommendedName>
    <alternativeName>
        <fullName>60S ribosomal protein L4-B</fullName>
    </alternativeName>
    <alternativeName>
        <fullName>L1B</fullName>
    </alternativeName>
</protein>
<organism>
    <name type="scientific">Xenopus laevis</name>
    <name type="common">African clawed frog</name>
    <dbReference type="NCBI Taxonomy" id="8355"/>
    <lineage>
        <taxon>Eukaryota</taxon>
        <taxon>Metazoa</taxon>
        <taxon>Chordata</taxon>
        <taxon>Craniata</taxon>
        <taxon>Vertebrata</taxon>
        <taxon>Euteleostomi</taxon>
        <taxon>Amphibia</taxon>
        <taxon>Batrachia</taxon>
        <taxon>Anura</taxon>
        <taxon>Pipoidea</taxon>
        <taxon>Pipidae</taxon>
        <taxon>Xenopodinae</taxon>
        <taxon>Xenopus</taxon>
        <taxon>Xenopus</taxon>
    </lineage>
</organism>
<gene>
    <name type="primary">rpl4-b</name>
    <name type="synonym">rpl1b</name>
</gene>
<evidence type="ECO:0000250" key="1">
    <source>
        <dbReference type="UniProtKB" id="P36578"/>
    </source>
</evidence>
<evidence type="ECO:0000256" key="2">
    <source>
        <dbReference type="SAM" id="MobiDB-lite"/>
    </source>
</evidence>
<evidence type="ECO:0000305" key="3"/>
<name>RL4B_XENLA</name>
<dbReference type="EMBL" id="BC041744">
    <property type="protein sequence ID" value="AAH41744.1"/>
    <property type="status" value="ALT_SEQ"/>
    <property type="molecule type" value="mRNA"/>
</dbReference>
<dbReference type="EMBL" id="X05217">
    <property type="protein sequence ID" value="CAA28844.1"/>
    <property type="molecule type" value="mRNA"/>
</dbReference>
<dbReference type="EMBL" id="V01438">
    <property type="protein sequence ID" value="CAA24699.1"/>
    <property type="molecule type" value="mRNA"/>
</dbReference>
<dbReference type="PIR" id="B24579">
    <property type="entry name" value="R5XL1B"/>
</dbReference>
<dbReference type="RefSeq" id="NP_001082721.1">
    <property type="nucleotide sequence ID" value="NM_001089252.2"/>
</dbReference>
<dbReference type="PDB" id="7OYC">
    <property type="method" value="EM"/>
    <property type="resolution" value="2.40 A"/>
    <property type="chains" value="C1=1-401"/>
</dbReference>
<dbReference type="PDBsum" id="7OYC"/>
<dbReference type="EMDB" id="EMD-13113"/>
<dbReference type="SMR" id="P02385"/>
<dbReference type="BioGRID" id="100008">
    <property type="interactions" value="1"/>
</dbReference>
<dbReference type="DNASU" id="398678"/>
<dbReference type="GeneID" id="398678"/>
<dbReference type="KEGG" id="xla:398678"/>
<dbReference type="AGR" id="Xenbase:XB-GENE-6255762"/>
<dbReference type="CTD" id="398678"/>
<dbReference type="Xenbase" id="XB-GENE-6255762">
    <property type="gene designation" value="rpl4.S"/>
</dbReference>
<dbReference type="OMA" id="ALYGTWR"/>
<dbReference type="OrthoDB" id="10259785at2759"/>
<dbReference type="Proteomes" id="UP000186698">
    <property type="component" value="Chromosome 3S"/>
</dbReference>
<dbReference type="Bgee" id="398678">
    <property type="expression patterns" value="Expressed in spleen and 19 other cell types or tissues"/>
</dbReference>
<dbReference type="GO" id="GO:0022625">
    <property type="term" value="C:cytosolic large ribosomal subunit"/>
    <property type="evidence" value="ECO:0000318"/>
    <property type="project" value="GO_Central"/>
</dbReference>
<dbReference type="GO" id="GO:0003723">
    <property type="term" value="F:RNA binding"/>
    <property type="evidence" value="ECO:0000318"/>
    <property type="project" value="GO_Central"/>
</dbReference>
<dbReference type="GO" id="GO:0003735">
    <property type="term" value="F:structural constituent of ribosome"/>
    <property type="evidence" value="ECO:0000318"/>
    <property type="project" value="GO_Central"/>
</dbReference>
<dbReference type="GO" id="GO:0006412">
    <property type="term" value="P:translation"/>
    <property type="evidence" value="ECO:0007669"/>
    <property type="project" value="InterPro"/>
</dbReference>
<dbReference type="FunFam" id="3.40.1370.10:FF:000002">
    <property type="entry name" value="60S ribosomal protein L4"/>
    <property type="match status" value="1"/>
</dbReference>
<dbReference type="Gene3D" id="3.40.1370.10">
    <property type="match status" value="1"/>
</dbReference>
<dbReference type="InterPro" id="IPR025755">
    <property type="entry name" value="Ribos_uL4_C_dom"/>
</dbReference>
<dbReference type="InterPro" id="IPR002136">
    <property type="entry name" value="Ribosomal_uL4"/>
</dbReference>
<dbReference type="InterPro" id="IPR023574">
    <property type="entry name" value="Ribosomal_uL4_dom_sf"/>
</dbReference>
<dbReference type="InterPro" id="IPR013000">
    <property type="entry name" value="Ribosomal_uL4_euk/arc_CS"/>
</dbReference>
<dbReference type="InterPro" id="IPR045240">
    <property type="entry name" value="Ribosomal_uL4_euk/arch"/>
</dbReference>
<dbReference type="PANTHER" id="PTHR19431">
    <property type="entry name" value="60S RIBOSOMAL PROTEIN L4"/>
    <property type="match status" value="1"/>
</dbReference>
<dbReference type="Pfam" id="PF14374">
    <property type="entry name" value="Ribos_L4_asso_C"/>
    <property type="match status" value="1"/>
</dbReference>
<dbReference type="Pfam" id="PF00573">
    <property type="entry name" value="Ribosomal_L4"/>
    <property type="match status" value="1"/>
</dbReference>
<dbReference type="SUPFAM" id="SSF52166">
    <property type="entry name" value="Ribosomal protein L4"/>
    <property type="match status" value="1"/>
</dbReference>
<dbReference type="PROSITE" id="PS00939">
    <property type="entry name" value="RIBOSOMAL_L1E"/>
    <property type="match status" value="1"/>
</dbReference>
<reference key="1">
    <citation type="submission" date="2002-12" db="EMBL/GenBank/DDBJ databases">
        <authorList>
            <consortium name="NIH - Xenopus Gene Collection (XGC) project"/>
        </authorList>
    </citation>
    <scope>NUCLEOTIDE SEQUENCE [LARGE SCALE MRNA] OF 1-372</scope>
    <source>
        <tissue>Embryo</tissue>
    </source>
</reference>
<reference key="2">
    <citation type="journal article" date="1985" name="EMBO J.">
        <title>Nucleotide sequence of the L1 ribosomal protein gene of Xenopus laevis: remarkable sequence homology among introns.</title>
        <authorList>
            <person name="Loreni F."/>
            <person name="Ruberti I."/>
            <person name="Bozzoni I."/>
            <person name="Pierandrei-Amaldi P."/>
            <person name="Amaldi F."/>
        </authorList>
    </citation>
    <scope>NUCLEOTIDE SEQUENCE [MRNA] OF 6-401</scope>
</reference>
<reference key="3">
    <citation type="journal article" date="1982" name="Gene">
        <title>Nucleotide sequences of cloned cDNA fragments specific for six Xenopus laevis ribosomal proteins.</title>
        <authorList>
            <person name="Amaldi F."/>
            <person name="Beccari E."/>
            <person name="Bozzoni I."/>
            <person name="Luo Z.-X."/>
            <person name="Pierandrei-Amaldi P."/>
        </authorList>
    </citation>
    <scope>NUCLEOTIDE SEQUENCE [MRNA] OF 291-401</scope>
</reference>
<proteinExistence type="evidence at protein level"/>
<sequence length="401" mass="45426">MAVSMACARPLISVYSEKGETSGKNVTMPAVFKAPIRPDIVNFVHTNLRKNNRQPYAVSKLAGHQTSAESWGTGRAVARIPRVRGGGTHRSGQGAFGNMCRGGRMFAPTKTWRRWHRRVNTTQKRYAVCSALAASALPALIMSKGHRIEEIPEVPLVVEDKVESYKKTKEAVLLLKKLKAWNDIKKVYASQRMRAGKGKMRNRRRIQRRGPCVIYNENNGIIKAFRNIPGITLLNVSKLNLLRLAPGGHVGRFCIWTESAFRKLDDLYGTWRKSAKLKADYNLPMHKMTNTDLTRILKSQEIQRALRAPNKKVKRRELKKNPLKNLRIMMRLNPYAKTARRHAILQQLENIKAKEKKPDDGKPKAKKPLDAKTKMIKLAKAKKRQARAEAKTAEAKTAESK</sequence>
<keyword id="KW-0002">3D-structure</keyword>
<keyword id="KW-0963">Cytoplasm</keyword>
<keyword id="KW-1185">Reference proteome</keyword>
<keyword id="KW-0687">Ribonucleoprotein</keyword>
<keyword id="KW-0689">Ribosomal protein</keyword>
<feature type="chain" id="PRO_0000129355" description="Large ribosomal subunit protein uL4B">
    <location>
        <begin position="1"/>
        <end position="401"/>
    </location>
</feature>
<feature type="region of interest" description="Disordered" evidence="2">
    <location>
        <begin position="351"/>
        <end position="401"/>
    </location>
</feature>
<feature type="compositionally biased region" description="Basic and acidic residues" evidence="2">
    <location>
        <begin position="351"/>
        <end position="373"/>
    </location>
</feature>
<feature type="compositionally biased region" description="Basic residues" evidence="2">
    <location>
        <begin position="374"/>
        <end position="385"/>
    </location>
</feature>
<feature type="compositionally biased region" description="Basic and acidic residues" evidence="2">
    <location>
        <begin position="386"/>
        <end position="401"/>
    </location>
</feature>
<feature type="sequence conflict" description="In Ref. 2; CAA24699." evidence="3" ref="2">
    <original>TDLT</original>
    <variation>LICA</variation>
    <location>
        <begin position="291"/>
        <end position="294"/>
    </location>
</feature>
<feature type="sequence conflict" description="In Ref. 2; CAA24699." evidence="3" ref="2">
    <original>L</original>
    <variation>P</variation>
    <location>
        <position position="326"/>
    </location>
</feature>
<feature type="sequence conflict" description="In Ref. 2; CAA24699." evidence="3" ref="2">
    <original>HAI</original>
    <variation>MH</variation>
    <location>
        <begin position="342"/>
        <end position="344"/>
    </location>
</feature>
<feature type="sequence conflict" description="In Ref. 2; CAA24699." evidence="3" ref="2">
    <original>R</original>
    <variation>K</variation>
    <location>
        <position position="387"/>
    </location>
</feature>